<evidence type="ECO:0000255" key="1">
    <source>
        <dbReference type="HAMAP-Rule" id="MF_01006"/>
    </source>
</evidence>
<sequence length="282" mass="30410">MTLFEAIMLGIVQGLTEFLPISSTAHLKIVPALLGWSDPGAAFTAIIQIGTLAAVLMYFWRDIITIVSAVMKGILKGKPLESNEARMGWMIAAGTIPIVVFGLLFKDQIETTLRSLYWISGALIGLALLLSLAEWNIKKHLSGGRPLKTMEQIGWKEALLIGLAQSIALIPGSSRSGVTITGGLFLNLSRETAARFSFLLSLPAVFAAGIFQLYKTWDIITASPGNIMNLAAATFTSAVVGYLSIAFLLSYLKKHTTTIFIIYRLLAGILLLLLLSTGTLLP</sequence>
<proteinExistence type="inferred from homology"/>
<feature type="chain" id="PRO_1000083984" description="Undecaprenyl-diphosphatase">
    <location>
        <begin position="1"/>
        <end position="282"/>
    </location>
</feature>
<feature type="transmembrane region" description="Helical" evidence="1">
    <location>
        <begin position="40"/>
        <end position="60"/>
    </location>
</feature>
<feature type="transmembrane region" description="Helical" evidence="1">
    <location>
        <begin position="85"/>
        <end position="105"/>
    </location>
</feature>
<feature type="transmembrane region" description="Helical" evidence="1">
    <location>
        <begin position="115"/>
        <end position="135"/>
    </location>
</feature>
<feature type="transmembrane region" description="Helical" evidence="1">
    <location>
        <begin position="153"/>
        <end position="173"/>
    </location>
</feature>
<feature type="transmembrane region" description="Helical" evidence="1">
    <location>
        <begin position="193"/>
        <end position="213"/>
    </location>
</feature>
<feature type="transmembrane region" description="Helical" evidence="1">
    <location>
        <begin position="230"/>
        <end position="250"/>
    </location>
</feature>
<feature type="transmembrane region" description="Helical" evidence="1">
    <location>
        <begin position="258"/>
        <end position="278"/>
    </location>
</feature>
<dbReference type="EC" id="3.6.1.27" evidence="1"/>
<dbReference type="EMBL" id="CP000607">
    <property type="protein sequence ID" value="ABP36514.1"/>
    <property type="molecule type" value="Genomic_DNA"/>
</dbReference>
<dbReference type="SMR" id="A4SDF5"/>
<dbReference type="STRING" id="290318.Cvib_0492"/>
<dbReference type="KEGG" id="pvi:Cvib_0492"/>
<dbReference type="eggNOG" id="COG1968">
    <property type="taxonomic scope" value="Bacteria"/>
</dbReference>
<dbReference type="HOGENOM" id="CLU_060296_1_0_10"/>
<dbReference type="OrthoDB" id="9808289at2"/>
<dbReference type="GO" id="GO:0005886">
    <property type="term" value="C:plasma membrane"/>
    <property type="evidence" value="ECO:0007669"/>
    <property type="project" value="UniProtKB-SubCell"/>
</dbReference>
<dbReference type="GO" id="GO:0050380">
    <property type="term" value="F:undecaprenyl-diphosphatase activity"/>
    <property type="evidence" value="ECO:0007669"/>
    <property type="project" value="UniProtKB-UniRule"/>
</dbReference>
<dbReference type="GO" id="GO:0071555">
    <property type="term" value="P:cell wall organization"/>
    <property type="evidence" value="ECO:0007669"/>
    <property type="project" value="UniProtKB-KW"/>
</dbReference>
<dbReference type="GO" id="GO:0009252">
    <property type="term" value="P:peptidoglycan biosynthetic process"/>
    <property type="evidence" value="ECO:0007669"/>
    <property type="project" value="UniProtKB-KW"/>
</dbReference>
<dbReference type="GO" id="GO:0008360">
    <property type="term" value="P:regulation of cell shape"/>
    <property type="evidence" value="ECO:0007669"/>
    <property type="project" value="UniProtKB-KW"/>
</dbReference>
<dbReference type="GO" id="GO:0046677">
    <property type="term" value="P:response to antibiotic"/>
    <property type="evidence" value="ECO:0007669"/>
    <property type="project" value="UniProtKB-UniRule"/>
</dbReference>
<dbReference type="HAMAP" id="MF_01006">
    <property type="entry name" value="Undec_diphosphatase"/>
    <property type="match status" value="1"/>
</dbReference>
<dbReference type="InterPro" id="IPR003824">
    <property type="entry name" value="UppP"/>
</dbReference>
<dbReference type="NCBIfam" id="TIGR00753">
    <property type="entry name" value="undec_PP_bacA"/>
    <property type="match status" value="1"/>
</dbReference>
<dbReference type="PANTHER" id="PTHR30622">
    <property type="entry name" value="UNDECAPRENYL-DIPHOSPHATASE"/>
    <property type="match status" value="1"/>
</dbReference>
<dbReference type="PANTHER" id="PTHR30622:SF4">
    <property type="entry name" value="UNDECAPRENYL-DIPHOSPHATASE"/>
    <property type="match status" value="1"/>
</dbReference>
<dbReference type="Pfam" id="PF02673">
    <property type="entry name" value="BacA"/>
    <property type="match status" value="1"/>
</dbReference>
<protein>
    <recommendedName>
        <fullName evidence="1">Undecaprenyl-diphosphatase</fullName>
        <ecNumber evidence="1">3.6.1.27</ecNumber>
    </recommendedName>
    <alternativeName>
        <fullName evidence="1">Bacitracin resistance protein</fullName>
    </alternativeName>
    <alternativeName>
        <fullName evidence="1">Undecaprenyl pyrophosphate phosphatase</fullName>
    </alternativeName>
</protein>
<accession>A4SDF5</accession>
<reference key="1">
    <citation type="submission" date="2007-03" db="EMBL/GenBank/DDBJ databases">
        <title>Complete sequence of Prosthecochloris vibrioformis DSM 265.</title>
        <authorList>
            <consortium name="US DOE Joint Genome Institute"/>
            <person name="Copeland A."/>
            <person name="Lucas S."/>
            <person name="Lapidus A."/>
            <person name="Barry K."/>
            <person name="Detter J.C."/>
            <person name="Glavina del Rio T."/>
            <person name="Hammon N."/>
            <person name="Israni S."/>
            <person name="Pitluck S."/>
            <person name="Schmutz J."/>
            <person name="Larimer F."/>
            <person name="Land M."/>
            <person name="Hauser L."/>
            <person name="Mikhailova N."/>
            <person name="Li T."/>
            <person name="Overmann J."/>
            <person name="Schuster S.C."/>
            <person name="Bryant D.A."/>
            <person name="Richardson P."/>
        </authorList>
    </citation>
    <scope>NUCLEOTIDE SEQUENCE [LARGE SCALE GENOMIC DNA]</scope>
    <source>
        <strain>DSM 265 / 1930</strain>
    </source>
</reference>
<comment type="function">
    <text evidence="1">Catalyzes the dephosphorylation of undecaprenyl diphosphate (UPP). Confers resistance to bacitracin.</text>
</comment>
<comment type="catalytic activity">
    <reaction evidence="1">
        <text>di-trans,octa-cis-undecaprenyl diphosphate + H2O = di-trans,octa-cis-undecaprenyl phosphate + phosphate + H(+)</text>
        <dbReference type="Rhea" id="RHEA:28094"/>
        <dbReference type="ChEBI" id="CHEBI:15377"/>
        <dbReference type="ChEBI" id="CHEBI:15378"/>
        <dbReference type="ChEBI" id="CHEBI:43474"/>
        <dbReference type="ChEBI" id="CHEBI:58405"/>
        <dbReference type="ChEBI" id="CHEBI:60392"/>
        <dbReference type="EC" id="3.6.1.27"/>
    </reaction>
</comment>
<comment type="subcellular location">
    <subcellularLocation>
        <location evidence="1">Cell inner membrane</location>
        <topology evidence="1">Multi-pass membrane protein</topology>
    </subcellularLocation>
</comment>
<comment type="miscellaneous">
    <text>Bacitracin is thought to be involved in the inhibition of peptidoglycan synthesis by sequestering undecaprenyl diphosphate, thereby reducing the pool of lipid carrier available.</text>
</comment>
<comment type="similarity">
    <text evidence="1">Belongs to the UppP family.</text>
</comment>
<gene>
    <name evidence="1" type="primary">uppP</name>
    <name type="ordered locus">Cvib_0492</name>
</gene>
<keyword id="KW-0046">Antibiotic resistance</keyword>
<keyword id="KW-0997">Cell inner membrane</keyword>
<keyword id="KW-1003">Cell membrane</keyword>
<keyword id="KW-0133">Cell shape</keyword>
<keyword id="KW-0961">Cell wall biogenesis/degradation</keyword>
<keyword id="KW-0378">Hydrolase</keyword>
<keyword id="KW-0472">Membrane</keyword>
<keyword id="KW-0573">Peptidoglycan synthesis</keyword>
<keyword id="KW-0812">Transmembrane</keyword>
<keyword id="KW-1133">Transmembrane helix</keyword>
<name>UPPP_CHLPM</name>
<organism>
    <name type="scientific">Chlorobium phaeovibrioides (strain DSM 265 / 1930)</name>
    <name type="common">Prosthecochloris vibrioformis (strain DSM 265)</name>
    <dbReference type="NCBI Taxonomy" id="290318"/>
    <lineage>
        <taxon>Bacteria</taxon>
        <taxon>Pseudomonadati</taxon>
        <taxon>Chlorobiota</taxon>
        <taxon>Chlorobiia</taxon>
        <taxon>Chlorobiales</taxon>
        <taxon>Chlorobiaceae</taxon>
        <taxon>Chlorobium/Pelodictyon group</taxon>
        <taxon>Chlorobium</taxon>
    </lineage>
</organism>